<sequence length="330" mass="35458">MTLRIAITPGEPAGIGPDLLLKLAQQTWDAQLVAIADANMLKQRAKHLGLSIKLIEFDQHAAATPAPAGSLYLHQVDVAEPVELGVLNDANGQYVLDTLRIASEKNMDGTFAAVVTGPVHKGIINKAGISFSGHTEYFAQQSNTADVVMMLATQGLRVALVTTHIPLAYVSRAITEDRLIKVASILNHDLQTKFGIEKPRILVCGLNPHAGEDGHLGREEIDTIIPTLEILNNQGMNLIGPLPADTLFQDKYLNEADAVLAMYHDQGLPVLKYKGFGNSVNITLGLPFIRTSVDHGTALDLAGKGTADVGSFELAIREAIKLAQEKAQNQ</sequence>
<evidence type="ECO:0000255" key="1">
    <source>
        <dbReference type="HAMAP-Rule" id="MF_00536"/>
    </source>
</evidence>
<protein>
    <recommendedName>
        <fullName evidence="1">4-hydroxythreonine-4-phosphate dehydrogenase</fullName>
        <ecNumber evidence="1">1.1.1.262</ecNumber>
    </recommendedName>
    <alternativeName>
        <fullName evidence="1">4-(phosphohydroxy)-L-threonine dehydrogenase</fullName>
    </alternativeName>
</protein>
<name>PDXA_PSET1</name>
<reference key="1">
    <citation type="journal article" date="2005" name="Genome Res.">
        <title>Coping with cold: the genome of the versatile marine Antarctica bacterium Pseudoalteromonas haloplanktis TAC125.</title>
        <authorList>
            <person name="Medigue C."/>
            <person name="Krin E."/>
            <person name="Pascal G."/>
            <person name="Barbe V."/>
            <person name="Bernsel A."/>
            <person name="Bertin P.N."/>
            <person name="Cheung F."/>
            <person name="Cruveiller S."/>
            <person name="D'Amico S."/>
            <person name="Duilio A."/>
            <person name="Fang G."/>
            <person name="Feller G."/>
            <person name="Ho C."/>
            <person name="Mangenot S."/>
            <person name="Marino G."/>
            <person name="Nilsson J."/>
            <person name="Parrilli E."/>
            <person name="Rocha E.P.C."/>
            <person name="Rouy Z."/>
            <person name="Sekowska A."/>
            <person name="Tutino M.L."/>
            <person name="Vallenet D."/>
            <person name="von Heijne G."/>
            <person name="Danchin A."/>
        </authorList>
    </citation>
    <scope>NUCLEOTIDE SEQUENCE [LARGE SCALE GENOMIC DNA]</scope>
    <source>
        <strain>TAC 125</strain>
    </source>
</reference>
<organism>
    <name type="scientific">Pseudoalteromonas translucida (strain TAC 125)</name>
    <dbReference type="NCBI Taxonomy" id="326442"/>
    <lineage>
        <taxon>Bacteria</taxon>
        <taxon>Pseudomonadati</taxon>
        <taxon>Pseudomonadota</taxon>
        <taxon>Gammaproteobacteria</taxon>
        <taxon>Alteromonadales</taxon>
        <taxon>Pseudoalteromonadaceae</taxon>
        <taxon>Pseudoalteromonas</taxon>
    </lineage>
</organism>
<feature type="chain" id="PRO_1000128258" description="4-hydroxythreonine-4-phosphate dehydrogenase">
    <location>
        <begin position="1"/>
        <end position="330"/>
    </location>
</feature>
<feature type="binding site" evidence="1">
    <location>
        <position position="134"/>
    </location>
    <ligand>
        <name>substrate</name>
    </ligand>
</feature>
<feature type="binding site" evidence="1">
    <location>
        <position position="135"/>
    </location>
    <ligand>
        <name>substrate</name>
    </ligand>
</feature>
<feature type="binding site" evidence="1">
    <location>
        <position position="164"/>
    </location>
    <ligand>
        <name>a divalent metal cation</name>
        <dbReference type="ChEBI" id="CHEBI:60240"/>
        <note>ligand shared between dimeric partners</note>
    </ligand>
</feature>
<feature type="binding site" evidence="1">
    <location>
        <position position="209"/>
    </location>
    <ligand>
        <name>a divalent metal cation</name>
        <dbReference type="ChEBI" id="CHEBI:60240"/>
        <note>ligand shared between dimeric partners</note>
    </ligand>
</feature>
<feature type="binding site" evidence="1">
    <location>
        <position position="264"/>
    </location>
    <ligand>
        <name>a divalent metal cation</name>
        <dbReference type="ChEBI" id="CHEBI:60240"/>
        <note>ligand shared between dimeric partners</note>
    </ligand>
</feature>
<feature type="binding site" evidence="1">
    <location>
        <position position="272"/>
    </location>
    <ligand>
        <name>substrate</name>
    </ligand>
</feature>
<feature type="binding site" evidence="1">
    <location>
        <position position="281"/>
    </location>
    <ligand>
        <name>substrate</name>
    </ligand>
</feature>
<feature type="binding site" evidence="1">
    <location>
        <position position="290"/>
    </location>
    <ligand>
        <name>substrate</name>
    </ligand>
</feature>
<gene>
    <name evidence="1" type="primary">pdxA</name>
    <name type="ordered locus">PSHAa2634</name>
</gene>
<proteinExistence type="inferred from homology"/>
<accession>Q3IFD2</accession>
<comment type="function">
    <text evidence="1">Catalyzes the NAD(P)-dependent oxidation of 4-(phosphooxy)-L-threonine (HTP) into 2-amino-3-oxo-4-(phosphooxy)butyric acid which spontaneously decarboxylates to form 3-amino-2-oxopropyl phosphate (AHAP).</text>
</comment>
<comment type="catalytic activity">
    <reaction evidence="1">
        <text>4-(phosphooxy)-L-threonine + NAD(+) = 3-amino-2-oxopropyl phosphate + CO2 + NADH</text>
        <dbReference type="Rhea" id="RHEA:32275"/>
        <dbReference type="ChEBI" id="CHEBI:16526"/>
        <dbReference type="ChEBI" id="CHEBI:57279"/>
        <dbReference type="ChEBI" id="CHEBI:57540"/>
        <dbReference type="ChEBI" id="CHEBI:57945"/>
        <dbReference type="ChEBI" id="CHEBI:58452"/>
        <dbReference type="EC" id="1.1.1.262"/>
    </reaction>
</comment>
<comment type="cofactor">
    <cofactor evidence="1">
        <name>Zn(2+)</name>
        <dbReference type="ChEBI" id="CHEBI:29105"/>
    </cofactor>
    <cofactor evidence="1">
        <name>Mg(2+)</name>
        <dbReference type="ChEBI" id="CHEBI:18420"/>
    </cofactor>
    <cofactor evidence="1">
        <name>Co(2+)</name>
        <dbReference type="ChEBI" id="CHEBI:48828"/>
    </cofactor>
    <text evidence="1">Binds 1 divalent metal cation per subunit. Can use ions such as Zn(2+), Mg(2+) or Co(2+).</text>
</comment>
<comment type="pathway">
    <text evidence="1">Cofactor biosynthesis; pyridoxine 5'-phosphate biosynthesis; pyridoxine 5'-phosphate from D-erythrose 4-phosphate: step 4/5.</text>
</comment>
<comment type="subunit">
    <text evidence="1">Homodimer.</text>
</comment>
<comment type="subcellular location">
    <subcellularLocation>
        <location evidence="1">Cytoplasm</location>
    </subcellularLocation>
</comment>
<comment type="miscellaneous">
    <text evidence="1">The active site is located at the dimer interface.</text>
</comment>
<comment type="similarity">
    <text evidence="1">Belongs to the PdxA family.</text>
</comment>
<dbReference type="EC" id="1.1.1.262" evidence="1"/>
<dbReference type="EMBL" id="CR954246">
    <property type="protein sequence ID" value="CAI87682.1"/>
    <property type="molecule type" value="Genomic_DNA"/>
</dbReference>
<dbReference type="SMR" id="Q3IFD2"/>
<dbReference type="STRING" id="326442.PSHAa2634"/>
<dbReference type="KEGG" id="pha:PSHAa2634"/>
<dbReference type="PATRIC" id="fig|326442.8.peg.2544"/>
<dbReference type="eggNOG" id="COG1995">
    <property type="taxonomic scope" value="Bacteria"/>
</dbReference>
<dbReference type="HOGENOM" id="CLU_040168_1_0_6"/>
<dbReference type="BioCyc" id="PHAL326442:PSHA_RS12965-MONOMER"/>
<dbReference type="UniPathway" id="UPA00244">
    <property type="reaction ID" value="UER00312"/>
</dbReference>
<dbReference type="Proteomes" id="UP000006843">
    <property type="component" value="Chromosome I"/>
</dbReference>
<dbReference type="GO" id="GO:0005737">
    <property type="term" value="C:cytoplasm"/>
    <property type="evidence" value="ECO:0007669"/>
    <property type="project" value="UniProtKB-SubCell"/>
</dbReference>
<dbReference type="GO" id="GO:0050570">
    <property type="term" value="F:4-hydroxythreonine-4-phosphate dehydrogenase activity"/>
    <property type="evidence" value="ECO:0007669"/>
    <property type="project" value="UniProtKB-UniRule"/>
</dbReference>
<dbReference type="GO" id="GO:0050897">
    <property type="term" value="F:cobalt ion binding"/>
    <property type="evidence" value="ECO:0007669"/>
    <property type="project" value="UniProtKB-UniRule"/>
</dbReference>
<dbReference type="GO" id="GO:0000287">
    <property type="term" value="F:magnesium ion binding"/>
    <property type="evidence" value="ECO:0007669"/>
    <property type="project" value="UniProtKB-UniRule"/>
</dbReference>
<dbReference type="GO" id="GO:0051287">
    <property type="term" value="F:NAD binding"/>
    <property type="evidence" value="ECO:0007669"/>
    <property type="project" value="InterPro"/>
</dbReference>
<dbReference type="GO" id="GO:0008270">
    <property type="term" value="F:zinc ion binding"/>
    <property type="evidence" value="ECO:0007669"/>
    <property type="project" value="UniProtKB-UniRule"/>
</dbReference>
<dbReference type="GO" id="GO:0042823">
    <property type="term" value="P:pyridoxal phosphate biosynthetic process"/>
    <property type="evidence" value="ECO:0007669"/>
    <property type="project" value="UniProtKB-UniRule"/>
</dbReference>
<dbReference type="GO" id="GO:0008615">
    <property type="term" value="P:pyridoxine biosynthetic process"/>
    <property type="evidence" value="ECO:0007669"/>
    <property type="project" value="UniProtKB-UniRule"/>
</dbReference>
<dbReference type="Gene3D" id="3.40.718.10">
    <property type="entry name" value="Isopropylmalate Dehydrogenase"/>
    <property type="match status" value="1"/>
</dbReference>
<dbReference type="HAMAP" id="MF_00536">
    <property type="entry name" value="PdxA"/>
    <property type="match status" value="1"/>
</dbReference>
<dbReference type="InterPro" id="IPR037510">
    <property type="entry name" value="PdxA"/>
</dbReference>
<dbReference type="InterPro" id="IPR005255">
    <property type="entry name" value="PdxA_fam"/>
</dbReference>
<dbReference type="NCBIfam" id="TIGR00557">
    <property type="entry name" value="pdxA"/>
    <property type="match status" value="1"/>
</dbReference>
<dbReference type="PANTHER" id="PTHR30004">
    <property type="entry name" value="4-HYDROXYTHREONINE-4-PHOSPHATE DEHYDROGENASE"/>
    <property type="match status" value="1"/>
</dbReference>
<dbReference type="PANTHER" id="PTHR30004:SF5">
    <property type="entry name" value="4-HYDROXYTHREONINE-4-PHOSPHATE DEHYDROGENASE"/>
    <property type="match status" value="1"/>
</dbReference>
<dbReference type="Pfam" id="PF04166">
    <property type="entry name" value="PdxA"/>
    <property type="match status" value="1"/>
</dbReference>
<dbReference type="SUPFAM" id="SSF53659">
    <property type="entry name" value="Isocitrate/Isopropylmalate dehydrogenase-like"/>
    <property type="match status" value="1"/>
</dbReference>
<keyword id="KW-0170">Cobalt</keyword>
<keyword id="KW-0963">Cytoplasm</keyword>
<keyword id="KW-0460">Magnesium</keyword>
<keyword id="KW-0479">Metal-binding</keyword>
<keyword id="KW-0520">NAD</keyword>
<keyword id="KW-0521">NADP</keyword>
<keyword id="KW-0560">Oxidoreductase</keyword>
<keyword id="KW-0664">Pyridoxine biosynthesis</keyword>
<keyword id="KW-1185">Reference proteome</keyword>
<keyword id="KW-0862">Zinc</keyword>